<feature type="chain" id="PRO_0000255818" description="Glutamate--cysteine ligase">
    <location>
        <begin position="1"/>
        <end position="363"/>
    </location>
</feature>
<accession>Q18H65</accession>
<comment type="function">
    <text evidence="1">Catalyzes the synthesis of gamma-glutamylcysteine (gamma-GC), the main low-molecular-weight thiol compound instead of glutathione in halophilic archaea.</text>
</comment>
<comment type="catalytic activity">
    <reaction evidence="1">
        <text>L-cysteine + L-glutamate + ATP = gamma-L-glutamyl-L-cysteine + ADP + phosphate + H(+)</text>
        <dbReference type="Rhea" id="RHEA:13285"/>
        <dbReference type="ChEBI" id="CHEBI:15378"/>
        <dbReference type="ChEBI" id="CHEBI:29985"/>
        <dbReference type="ChEBI" id="CHEBI:30616"/>
        <dbReference type="ChEBI" id="CHEBI:35235"/>
        <dbReference type="ChEBI" id="CHEBI:43474"/>
        <dbReference type="ChEBI" id="CHEBI:58173"/>
        <dbReference type="ChEBI" id="CHEBI:456216"/>
        <dbReference type="EC" id="6.3.2.2"/>
    </reaction>
</comment>
<comment type="similarity">
    <text evidence="1">Belongs to the glutamate--cysteine ligase type 2 family. YbdK subfamily.</text>
</comment>
<evidence type="ECO:0000255" key="1">
    <source>
        <dbReference type="HAMAP-Rule" id="MF_01609"/>
    </source>
</evidence>
<dbReference type="EC" id="6.3.2.2" evidence="1"/>
<dbReference type="EMBL" id="AM180088">
    <property type="protein sequence ID" value="CAJ52678.1"/>
    <property type="molecule type" value="Genomic_DNA"/>
</dbReference>
<dbReference type="RefSeq" id="WP_011571796.1">
    <property type="nucleotide sequence ID" value="NC_008212.1"/>
</dbReference>
<dbReference type="SMR" id="Q18H65"/>
<dbReference type="STRING" id="362976.HQ_2566A"/>
<dbReference type="GeneID" id="4194020"/>
<dbReference type="KEGG" id="hwa:HQ_2566A"/>
<dbReference type="eggNOG" id="arCOG02722">
    <property type="taxonomic scope" value="Archaea"/>
</dbReference>
<dbReference type="HOGENOM" id="CLU_044848_1_0_2"/>
<dbReference type="Proteomes" id="UP000001975">
    <property type="component" value="Chromosome"/>
</dbReference>
<dbReference type="GO" id="GO:0005524">
    <property type="term" value="F:ATP binding"/>
    <property type="evidence" value="ECO:0007669"/>
    <property type="project" value="UniProtKB-KW"/>
</dbReference>
<dbReference type="GO" id="GO:0004357">
    <property type="term" value="F:glutamate-cysteine ligase activity"/>
    <property type="evidence" value="ECO:0007669"/>
    <property type="project" value="UniProtKB-UniRule"/>
</dbReference>
<dbReference type="GO" id="GO:0042398">
    <property type="term" value="P:modified amino acid biosynthetic process"/>
    <property type="evidence" value="ECO:0007669"/>
    <property type="project" value="InterPro"/>
</dbReference>
<dbReference type="Gene3D" id="3.30.590.20">
    <property type="match status" value="1"/>
</dbReference>
<dbReference type="HAMAP" id="MF_01609">
    <property type="entry name" value="Glu_cys_ligase_2"/>
    <property type="match status" value="1"/>
</dbReference>
<dbReference type="InterPro" id="IPR050141">
    <property type="entry name" value="GCL_type2/YbdK_subfam"/>
</dbReference>
<dbReference type="InterPro" id="IPR006336">
    <property type="entry name" value="GCS2"/>
</dbReference>
<dbReference type="InterPro" id="IPR014746">
    <property type="entry name" value="Gln_synth/guanido_kin_cat_dom"/>
</dbReference>
<dbReference type="InterPro" id="IPR011793">
    <property type="entry name" value="YbdK"/>
</dbReference>
<dbReference type="NCBIfam" id="TIGR02050">
    <property type="entry name" value="gshA_cyan_rel"/>
    <property type="match status" value="1"/>
</dbReference>
<dbReference type="NCBIfam" id="NF010045">
    <property type="entry name" value="PRK13518.1"/>
    <property type="match status" value="1"/>
</dbReference>
<dbReference type="PANTHER" id="PTHR36510">
    <property type="entry name" value="GLUTAMATE--CYSTEINE LIGASE 2-RELATED"/>
    <property type="match status" value="1"/>
</dbReference>
<dbReference type="PANTHER" id="PTHR36510:SF1">
    <property type="entry name" value="GLUTAMATE--CYSTEINE LIGASE 2-RELATED"/>
    <property type="match status" value="1"/>
</dbReference>
<dbReference type="Pfam" id="PF04107">
    <property type="entry name" value="GCS2"/>
    <property type="match status" value="1"/>
</dbReference>
<dbReference type="SUPFAM" id="SSF55931">
    <property type="entry name" value="Glutamine synthetase/guanido kinase"/>
    <property type="match status" value="1"/>
</dbReference>
<keyword id="KW-0067">ATP-binding</keyword>
<keyword id="KW-0436">Ligase</keyword>
<keyword id="KW-0547">Nucleotide-binding</keyword>
<keyword id="KW-1185">Reference proteome</keyword>
<sequence length="363" mass="40593">MDVGSADAFDRMGTLGVEEEFFVVDDSGQPTAGIQELIYDYNHPPAGVLADRLDHELFQFVIETQTPLLEDVSAVSESVQAVRDALVTHAADHGYRIAAAGLHPTAKWRERNHVEKPRYQSQLDRIQYPQHRNTTAGLHVHVGVDDPDAATWIANELRWYLPPLLALSANSPYWNGFDTGLASARAKIFEALPNTGMPTRFEDFEAYYQLEKRMVETGSIKDRGELWYDVRPHTGHGTVEVRTPDAQADPSVTVAIVEYIHALVMDFAARYADGESGTKVRREILDANKWHAMRYGRDAEFIIPGSMETVTLSEFVDRETNRLGVDGLTTLLAREGGAKKQRRLHASDNIDTLLESLCLDTDT</sequence>
<name>GCS2_HALWD</name>
<organism>
    <name type="scientific">Haloquadratum walsbyi (strain DSM 16790 / HBSQ001)</name>
    <dbReference type="NCBI Taxonomy" id="362976"/>
    <lineage>
        <taxon>Archaea</taxon>
        <taxon>Methanobacteriati</taxon>
        <taxon>Methanobacteriota</taxon>
        <taxon>Stenosarchaea group</taxon>
        <taxon>Halobacteria</taxon>
        <taxon>Halobacteriales</taxon>
        <taxon>Haloferacaceae</taxon>
        <taxon>Haloquadratum</taxon>
    </lineage>
</organism>
<protein>
    <recommendedName>
        <fullName evidence="1">Glutamate--cysteine ligase</fullName>
        <ecNumber evidence="1">6.3.2.2</ecNumber>
    </recommendedName>
    <alternativeName>
        <fullName evidence="1">Gamma-glutamylcysteine synthetase</fullName>
        <shortName evidence="1">GCS</shortName>
        <shortName evidence="1">Gamma-GCS</shortName>
    </alternativeName>
</protein>
<proteinExistence type="inferred from homology"/>
<gene>
    <name evidence="1" type="primary">gshA</name>
    <name type="ordered locus">HQ_2566A</name>
</gene>
<reference key="1">
    <citation type="journal article" date="2006" name="BMC Genomics">
        <title>The genome of the square archaeon Haloquadratum walsbyi: life at the limits of water activity.</title>
        <authorList>
            <person name="Bolhuis H."/>
            <person name="Palm P."/>
            <person name="Wende A."/>
            <person name="Falb M."/>
            <person name="Rampp M."/>
            <person name="Rodriguez-Valera F."/>
            <person name="Pfeiffer F."/>
            <person name="Oesterhelt D."/>
        </authorList>
    </citation>
    <scope>NUCLEOTIDE SEQUENCE [LARGE SCALE GENOMIC DNA]</scope>
    <source>
        <strain>DSM 16790 / HBSQ001</strain>
    </source>
</reference>